<reference key="1">
    <citation type="journal article" date="2013" name="Nature">
        <title>The zebrafish reference genome sequence and its relationship to the human genome.</title>
        <authorList>
            <person name="Howe K."/>
            <person name="Clark M.D."/>
            <person name="Torroja C.F."/>
            <person name="Torrance J."/>
            <person name="Berthelot C."/>
            <person name="Muffato M."/>
            <person name="Collins J.E."/>
            <person name="Humphray S."/>
            <person name="McLaren K."/>
            <person name="Matthews L."/>
            <person name="McLaren S."/>
            <person name="Sealy I."/>
            <person name="Caccamo M."/>
            <person name="Churcher C."/>
            <person name="Scott C."/>
            <person name="Barrett J.C."/>
            <person name="Koch R."/>
            <person name="Rauch G.J."/>
            <person name="White S."/>
            <person name="Chow W."/>
            <person name="Kilian B."/>
            <person name="Quintais L.T."/>
            <person name="Guerra-Assuncao J.A."/>
            <person name="Zhou Y."/>
            <person name="Gu Y."/>
            <person name="Yen J."/>
            <person name="Vogel J.H."/>
            <person name="Eyre T."/>
            <person name="Redmond S."/>
            <person name="Banerjee R."/>
            <person name="Chi J."/>
            <person name="Fu B."/>
            <person name="Langley E."/>
            <person name="Maguire S.F."/>
            <person name="Laird G.K."/>
            <person name="Lloyd D."/>
            <person name="Kenyon E."/>
            <person name="Donaldson S."/>
            <person name="Sehra H."/>
            <person name="Almeida-King J."/>
            <person name="Loveland J."/>
            <person name="Trevanion S."/>
            <person name="Jones M."/>
            <person name="Quail M."/>
            <person name="Willey D."/>
            <person name="Hunt A."/>
            <person name="Burton J."/>
            <person name="Sims S."/>
            <person name="McLay K."/>
            <person name="Plumb B."/>
            <person name="Davis J."/>
            <person name="Clee C."/>
            <person name="Oliver K."/>
            <person name="Clark R."/>
            <person name="Riddle C."/>
            <person name="Elliot D."/>
            <person name="Threadgold G."/>
            <person name="Harden G."/>
            <person name="Ware D."/>
            <person name="Begum S."/>
            <person name="Mortimore B."/>
            <person name="Kerry G."/>
            <person name="Heath P."/>
            <person name="Phillimore B."/>
            <person name="Tracey A."/>
            <person name="Corby N."/>
            <person name="Dunn M."/>
            <person name="Johnson C."/>
            <person name="Wood J."/>
            <person name="Clark S."/>
            <person name="Pelan S."/>
            <person name="Griffiths G."/>
            <person name="Smith M."/>
            <person name="Glithero R."/>
            <person name="Howden P."/>
            <person name="Barker N."/>
            <person name="Lloyd C."/>
            <person name="Stevens C."/>
            <person name="Harley J."/>
            <person name="Holt K."/>
            <person name="Panagiotidis G."/>
            <person name="Lovell J."/>
            <person name="Beasley H."/>
            <person name="Henderson C."/>
            <person name="Gordon D."/>
            <person name="Auger K."/>
            <person name="Wright D."/>
            <person name="Collins J."/>
            <person name="Raisen C."/>
            <person name="Dyer L."/>
            <person name="Leung K."/>
            <person name="Robertson L."/>
            <person name="Ambridge K."/>
            <person name="Leongamornlert D."/>
            <person name="McGuire S."/>
            <person name="Gilderthorp R."/>
            <person name="Griffiths C."/>
            <person name="Manthravadi D."/>
            <person name="Nichol S."/>
            <person name="Barker G."/>
            <person name="Whitehead S."/>
            <person name="Kay M."/>
            <person name="Brown J."/>
            <person name="Murnane C."/>
            <person name="Gray E."/>
            <person name="Humphries M."/>
            <person name="Sycamore N."/>
            <person name="Barker D."/>
            <person name="Saunders D."/>
            <person name="Wallis J."/>
            <person name="Babbage A."/>
            <person name="Hammond S."/>
            <person name="Mashreghi-Mohammadi M."/>
            <person name="Barr L."/>
            <person name="Martin S."/>
            <person name="Wray P."/>
            <person name="Ellington A."/>
            <person name="Matthews N."/>
            <person name="Ellwood M."/>
            <person name="Woodmansey R."/>
            <person name="Clark G."/>
            <person name="Cooper J."/>
            <person name="Tromans A."/>
            <person name="Grafham D."/>
            <person name="Skuce C."/>
            <person name="Pandian R."/>
            <person name="Andrews R."/>
            <person name="Harrison E."/>
            <person name="Kimberley A."/>
            <person name="Garnett J."/>
            <person name="Fosker N."/>
            <person name="Hall R."/>
            <person name="Garner P."/>
            <person name="Kelly D."/>
            <person name="Bird C."/>
            <person name="Palmer S."/>
            <person name="Gehring I."/>
            <person name="Berger A."/>
            <person name="Dooley C.M."/>
            <person name="Ersan-Urun Z."/>
            <person name="Eser C."/>
            <person name="Geiger H."/>
            <person name="Geisler M."/>
            <person name="Karotki L."/>
            <person name="Kirn A."/>
            <person name="Konantz J."/>
            <person name="Konantz M."/>
            <person name="Oberlander M."/>
            <person name="Rudolph-Geiger S."/>
            <person name="Teucke M."/>
            <person name="Lanz C."/>
            <person name="Raddatz G."/>
            <person name="Osoegawa K."/>
            <person name="Zhu B."/>
            <person name="Rapp A."/>
            <person name="Widaa S."/>
            <person name="Langford C."/>
            <person name="Yang F."/>
            <person name="Schuster S.C."/>
            <person name="Carter N.P."/>
            <person name="Harrow J."/>
            <person name="Ning Z."/>
            <person name="Herrero J."/>
            <person name="Searle S.M."/>
            <person name="Enright A."/>
            <person name="Geisler R."/>
            <person name="Plasterk R.H."/>
            <person name="Lee C."/>
            <person name="Westerfield M."/>
            <person name="de Jong P.J."/>
            <person name="Zon L.I."/>
            <person name="Postlethwait J.H."/>
            <person name="Nusslein-Volhard C."/>
            <person name="Hubbard T.J."/>
            <person name="Roest Crollius H."/>
            <person name="Rogers J."/>
            <person name="Stemple D.L."/>
        </authorList>
    </citation>
    <scope>NUCLEOTIDE SEQUENCE [LARGE SCALE GENOMIC DNA]</scope>
    <source>
        <strain>Tuebingen</strain>
    </source>
</reference>
<accession>A9C3P0</accession>
<name>MLEC_DANRE</name>
<organism>
    <name type="scientific">Danio rerio</name>
    <name type="common">Zebrafish</name>
    <name type="synonym">Brachydanio rerio</name>
    <dbReference type="NCBI Taxonomy" id="7955"/>
    <lineage>
        <taxon>Eukaryota</taxon>
        <taxon>Metazoa</taxon>
        <taxon>Chordata</taxon>
        <taxon>Craniata</taxon>
        <taxon>Vertebrata</taxon>
        <taxon>Euteleostomi</taxon>
        <taxon>Actinopterygii</taxon>
        <taxon>Neopterygii</taxon>
        <taxon>Teleostei</taxon>
        <taxon>Ostariophysi</taxon>
        <taxon>Cypriniformes</taxon>
        <taxon>Danionidae</taxon>
        <taxon>Danioninae</taxon>
        <taxon>Danio</taxon>
    </lineage>
</organism>
<dbReference type="EMBL" id="CR376731">
    <property type="protein sequence ID" value="CAP19582.1"/>
    <property type="molecule type" value="Genomic_DNA"/>
</dbReference>
<dbReference type="RefSeq" id="NP_001107090.1">
    <property type="nucleotide sequence ID" value="NM_001113618.1"/>
</dbReference>
<dbReference type="SMR" id="A9C3P0"/>
<dbReference type="FunCoup" id="A9C3P0">
    <property type="interactions" value="1706"/>
</dbReference>
<dbReference type="STRING" id="7955.ENSDARP00000112772"/>
<dbReference type="CAZy" id="CBM57">
    <property type="family name" value="Carbohydrate-Binding Module Family 57"/>
</dbReference>
<dbReference type="GlyCosmos" id="A9C3P0">
    <property type="glycosylation" value="1 site, No reported glycans"/>
</dbReference>
<dbReference type="PaxDb" id="7955-ENSDARP00000077503"/>
<dbReference type="PeptideAtlas" id="A9C3P0"/>
<dbReference type="Ensembl" id="ENSDART00000131372">
    <property type="protein sequence ID" value="ENSDARP00000112772"/>
    <property type="gene ID" value="ENSDARG00000059630"/>
</dbReference>
<dbReference type="GeneID" id="569613"/>
<dbReference type="KEGG" id="dre:569613"/>
<dbReference type="AGR" id="ZFIN:ZDB-GENE-081105-187"/>
<dbReference type="CTD" id="9761"/>
<dbReference type="ZFIN" id="ZDB-GENE-081105-187">
    <property type="gene designation" value="mlec"/>
</dbReference>
<dbReference type="eggNOG" id="KOG3593">
    <property type="taxonomic scope" value="Eukaryota"/>
</dbReference>
<dbReference type="HOGENOM" id="CLU_065446_1_0_1"/>
<dbReference type="InParanoid" id="A9C3P0"/>
<dbReference type="OMA" id="PNPYSMD"/>
<dbReference type="OrthoDB" id="10013439at2759"/>
<dbReference type="PhylomeDB" id="A9C3P0"/>
<dbReference type="TreeFam" id="TF314856"/>
<dbReference type="Reactome" id="R-DRE-6798695">
    <property type="pathway name" value="Neutrophil degranulation"/>
</dbReference>
<dbReference type="PRO" id="PR:A9C3P0"/>
<dbReference type="Proteomes" id="UP000000437">
    <property type="component" value="Chromosome 8"/>
</dbReference>
<dbReference type="Bgee" id="ENSDARG00000059630">
    <property type="expression patterns" value="Expressed in early embryo and 20 other cell types or tissues"/>
</dbReference>
<dbReference type="GO" id="GO:0005783">
    <property type="term" value="C:endoplasmic reticulum"/>
    <property type="evidence" value="ECO:0000250"/>
    <property type="project" value="UniProtKB"/>
</dbReference>
<dbReference type="GO" id="GO:0005789">
    <property type="term" value="C:endoplasmic reticulum membrane"/>
    <property type="evidence" value="ECO:0007669"/>
    <property type="project" value="UniProtKB-SubCell"/>
</dbReference>
<dbReference type="GO" id="GO:0016020">
    <property type="term" value="C:membrane"/>
    <property type="evidence" value="ECO:0000318"/>
    <property type="project" value="GO_Central"/>
</dbReference>
<dbReference type="GO" id="GO:0030246">
    <property type="term" value="F:carbohydrate binding"/>
    <property type="evidence" value="ECO:0000250"/>
    <property type="project" value="UniProtKB"/>
</dbReference>
<dbReference type="FunFam" id="2.60.120.430:FF:000006">
    <property type="entry name" value="Malectin"/>
    <property type="match status" value="1"/>
</dbReference>
<dbReference type="Gene3D" id="2.60.120.430">
    <property type="entry name" value="Galactose-binding lectin"/>
    <property type="match status" value="1"/>
</dbReference>
<dbReference type="InterPro" id="IPR021720">
    <property type="entry name" value="Malectin_dom"/>
</dbReference>
<dbReference type="InterPro" id="IPR039155">
    <property type="entry name" value="MLEC"/>
</dbReference>
<dbReference type="PANTHER" id="PTHR13460">
    <property type="match status" value="1"/>
</dbReference>
<dbReference type="PANTHER" id="PTHR13460:SF0">
    <property type="entry name" value="MALECTIN"/>
    <property type="match status" value="1"/>
</dbReference>
<dbReference type="Pfam" id="PF11721">
    <property type="entry name" value="Malectin"/>
    <property type="match status" value="1"/>
</dbReference>
<keyword id="KW-0119">Carbohydrate metabolism</keyword>
<keyword id="KW-0256">Endoplasmic reticulum</keyword>
<keyword id="KW-0325">Glycoprotein</keyword>
<keyword id="KW-0472">Membrane</keyword>
<keyword id="KW-1185">Reference proteome</keyword>
<keyword id="KW-0732">Signal</keyword>
<keyword id="KW-0812">Transmembrane</keyword>
<keyword id="KW-1133">Transmembrane helix</keyword>
<sequence>MRRVTLHCAARLVIAALWLLVEVCRAESGAQSLAERVIWAVNAGGDTHTDVHGIQFKKDPLEGKVGKASDYGVRLPILRSSPEDQILYQTERYNEDTFGYEVPIREEGDYILVMKYAEVYFAQSQQKVFDVRLNGHVVVKDLDIFDRVGHSTAHDEIVPFSIKRGKLSVHGEVSTFNGKLTVEFVKGYYDNPKICALYVMKGKLEDVPKLQPHPGLEKREEEEEEEEEGEGPEGEKKSASTSPKNPVRSGPRTPNPYATDNSSLMFPILVAFGVFIPTLFCLCRL</sequence>
<protein>
    <recommendedName>
        <fullName evidence="1">Malectin</fullName>
    </recommendedName>
</protein>
<comment type="function">
    <text evidence="2">Carbohydrate-binding protein with a strong ligand preference for Glc2-N-glycan. May play a role in the early steps of protein N-glycosylation (By similarity).</text>
</comment>
<comment type="subcellular location">
    <subcellularLocation>
        <location evidence="2 3">Endoplasmic reticulum membrane</location>
        <topology evidence="2 3">Single-pass type I membrane protein</topology>
    </subcellularLocation>
</comment>
<comment type="similarity">
    <text evidence="5">Belongs to the malectin family.</text>
</comment>
<evidence type="ECO:0000250" key="1">
    <source>
        <dbReference type="UniProtKB" id="Q14165"/>
    </source>
</evidence>
<evidence type="ECO:0000250" key="2">
    <source>
        <dbReference type="UniProtKB" id="Q6INX3"/>
    </source>
</evidence>
<evidence type="ECO:0000255" key="3"/>
<evidence type="ECO:0000256" key="4">
    <source>
        <dbReference type="SAM" id="MobiDB-lite"/>
    </source>
</evidence>
<evidence type="ECO:0000305" key="5"/>
<gene>
    <name evidence="1" type="primary">mlec</name>
    <name type="ORF">si:dkey-117k10.5</name>
</gene>
<proteinExistence type="inferred from homology"/>
<feature type="signal peptide" evidence="3">
    <location>
        <begin position="1"/>
        <end position="26"/>
    </location>
</feature>
<feature type="chain" id="PRO_0000358589" description="Malectin" evidence="3">
    <location>
        <begin position="27"/>
        <end position="285"/>
    </location>
</feature>
<feature type="topological domain" description="Lumenal" evidence="3">
    <location>
        <begin position="27"/>
        <end position="262"/>
    </location>
</feature>
<feature type="transmembrane region" description="Helical" evidence="3">
    <location>
        <begin position="263"/>
        <end position="283"/>
    </location>
</feature>
<feature type="topological domain" description="Cytoplasmic" evidence="3">
    <location>
        <begin position="284"/>
        <end position="285"/>
    </location>
</feature>
<feature type="region of interest" description="Disordered" evidence="4">
    <location>
        <begin position="209"/>
        <end position="258"/>
    </location>
</feature>
<feature type="compositionally biased region" description="Acidic residues" evidence="4">
    <location>
        <begin position="220"/>
        <end position="232"/>
    </location>
</feature>
<feature type="binding site" evidence="2">
    <location>
        <position position="71"/>
    </location>
    <ligand>
        <name>a carbohydrate</name>
        <dbReference type="ChEBI" id="CHEBI:16646"/>
    </ligand>
</feature>
<feature type="binding site" evidence="2">
    <location>
        <position position="93"/>
    </location>
    <ligand>
        <name>a carbohydrate</name>
        <dbReference type="ChEBI" id="CHEBI:16646"/>
    </ligand>
</feature>
<feature type="binding site" evidence="2">
    <location>
        <position position="120"/>
    </location>
    <ligand>
        <name>a carbohydrate</name>
        <dbReference type="ChEBI" id="CHEBI:16646"/>
    </ligand>
</feature>
<feature type="binding site" evidence="2">
    <location>
        <position position="121"/>
    </location>
    <ligand>
        <name>a carbohydrate</name>
        <dbReference type="ChEBI" id="CHEBI:16646"/>
    </ligand>
</feature>
<feature type="binding site" evidence="2">
    <location>
        <position position="190"/>
    </location>
    <ligand>
        <name>a carbohydrate</name>
        <dbReference type="ChEBI" id="CHEBI:16646"/>
    </ligand>
</feature>
<feature type="glycosylation site" description="N-linked (GlcNAc...) asparagine" evidence="3">
    <location>
        <position position="261"/>
    </location>
</feature>